<name>RDXA_HELPJ</name>
<keyword id="KW-0521">NADP</keyword>
<keyword id="KW-0560">Oxidoreductase</keyword>
<dbReference type="EC" id="1.-.-.-"/>
<dbReference type="EMBL" id="AE001439">
    <property type="protein sequence ID" value="AAD06472.1"/>
    <property type="molecule type" value="Genomic_DNA"/>
</dbReference>
<dbReference type="PIR" id="A71876">
    <property type="entry name" value="A71876"/>
</dbReference>
<dbReference type="RefSeq" id="WP_000670014.1">
    <property type="nucleotide sequence ID" value="NC_000921.1"/>
</dbReference>
<dbReference type="SMR" id="Q9ZKP7"/>
<dbReference type="KEGG" id="hpj:jhp_0888"/>
<dbReference type="PATRIC" id="fig|85963.30.peg.73"/>
<dbReference type="eggNOG" id="COG0778">
    <property type="taxonomic scope" value="Bacteria"/>
</dbReference>
<dbReference type="Proteomes" id="UP000000804">
    <property type="component" value="Chromosome"/>
</dbReference>
<dbReference type="GO" id="GO:0016491">
    <property type="term" value="F:oxidoreductase activity"/>
    <property type="evidence" value="ECO:0007669"/>
    <property type="project" value="UniProtKB-KW"/>
</dbReference>
<dbReference type="CDD" id="cd02149">
    <property type="entry name" value="NfsB-like"/>
    <property type="match status" value="1"/>
</dbReference>
<dbReference type="Gene3D" id="3.40.109.10">
    <property type="entry name" value="NADH Oxidase"/>
    <property type="match status" value="1"/>
</dbReference>
<dbReference type="InterPro" id="IPR033878">
    <property type="entry name" value="NfsB-like"/>
</dbReference>
<dbReference type="InterPro" id="IPR029479">
    <property type="entry name" value="Nitroreductase"/>
</dbReference>
<dbReference type="InterPro" id="IPR000415">
    <property type="entry name" value="Nitroreductase-like"/>
</dbReference>
<dbReference type="PANTHER" id="PTHR43673">
    <property type="entry name" value="NAD(P)H NITROREDUCTASE YDGI-RELATED"/>
    <property type="match status" value="1"/>
</dbReference>
<dbReference type="PANTHER" id="PTHR43673:SF10">
    <property type="entry name" value="NADH DEHYDROGENASE_NAD(P)H NITROREDUCTASE XCC3605-RELATED"/>
    <property type="match status" value="1"/>
</dbReference>
<dbReference type="Pfam" id="PF00881">
    <property type="entry name" value="Nitroreductase"/>
    <property type="match status" value="1"/>
</dbReference>
<dbReference type="SUPFAM" id="SSF55469">
    <property type="entry name" value="FMN-dependent nitroreductase-like"/>
    <property type="match status" value="1"/>
</dbReference>
<reference key="1">
    <citation type="journal article" date="1999" name="Nature">
        <title>Genomic sequence comparison of two unrelated isolates of the human gastric pathogen Helicobacter pylori.</title>
        <authorList>
            <person name="Alm R.A."/>
            <person name="Ling L.-S.L."/>
            <person name="Moir D.T."/>
            <person name="King B.L."/>
            <person name="Brown E.D."/>
            <person name="Doig P.C."/>
            <person name="Smith D.R."/>
            <person name="Noonan B."/>
            <person name="Guild B.C."/>
            <person name="deJonge B.L."/>
            <person name="Carmel G."/>
            <person name="Tummino P.J."/>
            <person name="Caruso A."/>
            <person name="Uria-Nickelsen M."/>
            <person name="Mills D.M."/>
            <person name="Ives C."/>
            <person name="Gibson R."/>
            <person name="Merberg D."/>
            <person name="Mills S.D."/>
            <person name="Jiang Q."/>
            <person name="Taylor D.E."/>
            <person name="Vovis G.F."/>
            <person name="Trust T.J."/>
        </authorList>
    </citation>
    <scope>NUCLEOTIDE SEQUENCE [LARGE SCALE GENOMIC DNA]</scope>
    <source>
        <strain>J99 / ATCC 700824</strain>
    </source>
</reference>
<evidence type="ECO:0000250" key="1"/>
<evidence type="ECO:0000305" key="2"/>
<proteinExistence type="inferred from homology"/>
<accession>Q9ZKP7</accession>
<organism>
    <name type="scientific">Helicobacter pylori (strain J99 / ATCC 700824)</name>
    <name type="common">Campylobacter pylori J99</name>
    <dbReference type="NCBI Taxonomy" id="85963"/>
    <lineage>
        <taxon>Bacteria</taxon>
        <taxon>Pseudomonadati</taxon>
        <taxon>Campylobacterota</taxon>
        <taxon>Epsilonproteobacteria</taxon>
        <taxon>Campylobacterales</taxon>
        <taxon>Helicobacteraceae</taxon>
        <taxon>Helicobacter</taxon>
    </lineage>
</organism>
<gene>
    <name type="primary">rdxA</name>
    <name type="ordered locus">jhp_0888</name>
</gene>
<protein>
    <recommendedName>
        <fullName>Oxygen-insensitive NADPH nitroreductase</fullName>
        <ecNumber>1.-.-.-</ecNumber>
    </recommendedName>
</protein>
<feature type="chain" id="PRO_0000321867" description="Oxygen-insensitive NADPH nitroreductase">
    <location>
        <begin position="1"/>
        <end position="210"/>
    </location>
</feature>
<feature type="binding site" evidence="1">
    <location>
        <begin position="150"/>
        <end position="155"/>
    </location>
    <ligand>
        <name>NADP(+)</name>
        <dbReference type="ChEBI" id="CHEBI:58349"/>
    </ligand>
</feature>
<sequence length="210" mass="24056">MKFLDHEKRRQLLNERHSCKMFDSHYEFSSTELEEIAEIARLSPSSYNTQPWHFVMVTNKDLKKQIAAHSYFNEEMIKSASALMVVCSLKPSELLPTSHYMQNLYPESYKVRVIPSFAQMLGVRFNHSMQKLESYILEQCYIAVGQICMGVSLMGLDSCIIGGFDPLKVGEILEERINKPKIVCLIALGKRVAEASKKSRKSKVDAITWL</sequence>
<comment type="function">
    <text evidence="1">Reduction of a variety of nitroaromatic compounds using NADPH as source of reducing equivalents; two electrons are transferred.</text>
</comment>
<comment type="similarity">
    <text evidence="2">Belongs to the nitroreductase family.</text>
</comment>